<accession>B9DLR4</accession>
<protein>
    <recommendedName>
        <fullName evidence="1">Putative 3-methyladenine DNA glycosylase</fullName>
        <ecNumber evidence="1">3.2.2.-</ecNumber>
    </recommendedName>
</protein>
<feature type="chain" id="PRO_1000191302" description="Putative 3-methyladenine DNA glycosylase">
    <location>
        <begin position="1"/>
        <end position="206"/>
    </location>
</feature>
<gene>
    <name type="ordered locus">Sca_1843</name>
</gene>
<evidence type="ECO:0000255" key="1">
    <source>
        <dbReference type="HAMAP-Rule" id="MF_00527"/>
    </source>
</evidence>
<organism>
    <name type="scientific">Staphylococcus carnosus (strain TM300)</name>
    <dbReference type="NCBI Taxonomy" id="396513"/>
    <lineage>
        <taxon>Bacteria</taxon>
        <taxon>Bacillati</taxon>
        <taxon>Bacillota</taxon>
        <taxon>Bacilli</taxon>
        <taxon>Bacillales</taxon>
        <taxon>Staphylococcaceae</taxon>
        <taxon>Staphylococcus</taxon>
    </lineage>
</organism>
<comment type="similarity">
    <text evidence="1">Belongs to the DNA glycosylase MPG family.</text>
</comment>
<dbReference type="EC" id="3.2.2.-" evidence="1"/>
<dbReference type="EMBL" id="AM295250">
    <property type="protein sequence ID" value="CAL28749.1"/>
    <property type="molecule type" value="Genomic_DNA"/>
</dbReference>
<dbReference type="RefSeq" id="WP_015901085.1">
    <property type="nucleotide sequence ID" value="NC_012121.1"/>
</dbReference>
<dbReference type="SMR" id="B9DLR4"/>
<dbReference type="GeneID" id="93794300"/>
<dbReference type="KEGG" id="sca:SCA_1843"/>
<dbReference type="eggNOG" id="COG2094">
    <property type="taxonomic scope" value="Bacteria"/>
</dbReference>
<dbReference type="HOGENOM" id="CLU_060471_2_0_9"/>
<dbReference type="OrthoDB" id="9794313at2"/>
<dbReference type="BioCyc" id="SCAR396513:SCA_RS09360-MONOMER"/>
<dbReference type="Proteomes" id="UP000000444">
    <property type="component" value="Chromosome"/>
</dbReference>
<dbReference type="GO" id="GO:0003905">
    <property type="term" value="F:alkylbase DNA N-glycosylase activity"/>
    <property type="evidence" value="ECO:0007669"/>
    <property type="project" value="InterPro"/>
</dbReference>
<dbReference type="GO" id="GO:0003677">
    <property type="term" value="F:DNA binding"/>
    <property type="evidence" value="ECO:0007669"/>
    <property type="project" value="InterPro"/>
</dbReference>
<dbReference type="GO" id="GO:0006284">
    <property type="term" value="P:base-excision repair"/>
    <property type="evidence" value="ECO:0007669"/>
    <property type="project" value="InterPro"/>
</dbReference>
<dbReference type="CDD" id="cd00540">
    <property type="entry name" value="AAG"/>
    <property type="match status" value="1"/>
</dbReference>
<dbReference type="FunFam" id="3.10.300.10:FF:000001">
    <property type="entry name" value="Putative 3-methyladenine DNA glycosylase"/>
    <property type="match status" value="1"/>
</dbReference>
<dbReference type="Gene3D" id="3.10.300.10">
    <property type="entry name" value="Methylpurine-DNA glycosylase (MPG)"/>
    <property type="match status" value="1"/>
</dbReference>
<dbReference type="HAMAP" id="MF_00527">
    <property type="entry name" value="3MGH"/>
    <property type="match status" value="1"/>
</dbReference>
<dbReference type="InterPro" id="IPR011034">
    <property type="entry name" value="Formyl_transferase-like_C_sf"/>
</dbReference>
<dbReference type="InterPro" id="IPR003180">
    <property type="entry name" value="MPG"/>
</dbReference>
<dbReference type="InterPro" id="IPR036995">
    <property type="entry name" value="MPG_sf"/>
</dbReference>
<dbReference type="NCBIfam" id="TIGR00567">
    <property type="entry name" value="3mg"/>
    <property type="match status" value="1"/>
</dbReference>
<dbReference type="PANTHER" id="PTHR10429">
    <property type="entry name" value="DNA-3-METHYLADENINE GLYCOSYLASE"/>
    <property type="match status" value="1"/>
</dbReference>
<dbReference type="PANTHER" id="PTHR10429:SF0">
    <property type="entry name" value="DNA-3-METHYLADENINE GLYCOSYLASE"/>
    <property type="match status" value="1"/>
</dbReference>
<dbReference type="Pfam" id="PF02245">
    <property type="entry name" value="Pur_DNA_glyco"/>
    <property type="match status" value="1"/>
</dbReference>
<dbReference type="SUPFAM" id="SSF50486">
    <property type="entry name" value="FMT C-terminal domain-like"/>
    <property type="match status" value="1"/>
</dbReference>
<keyword id="KW-0227">DNA damage</keyword>
<keyword id="KW-0234">DNA repair</keyword>
<keyword id="KW-0378">Hydrolase</keyword>
<keyword id="KW-1185">Reference proteome</keyword>
<reference key="1">
    <citation type="journal article" date="2009" name="Appl. Environ. Microbiol.">
        <title>Genome analysis of the meat starter culture bacterium Staphylococcus carnosus TM300.</title>
        <authorList>
            <person name="Rosenstein R."/>
            <person name="Nerz C."/>
            <person name="Biswas L."/>
            <person name="Resch A."/>
            <person name="Raddatz G."/>
            <person name="Schuster S.C."/>
            <person name="Goetz F."/>
        </authorList>
    </citation>
    <scope>NUCLEOTIDE SEQUENCE [LARGE SCALE GENOMIC DNA]</scope>
    <source>
        <strain>TM300</strain>
    </source>
</reference>
<sequence length="206" mass="23085">MDFINRTTPEIAKDLLGVKLIFDDGENQFSGYIVETEAYLGKIDEAAHSYNGRQTPRVQSMYKDGGTIYAHVMHTHLLINLVTQPAGTAEGVLIRALEPELITDQMIENRNGKVGIDVTNGPGKWTRAFNMSMALDGLRLNEGPLSIDTKARKYPSSILESPRIGVPNKGEWTHKPLRFTVEGNPYVSRMRKSDMLAAEDTWKKHK</sequence>
<proteinExistence type="inferred from homology"/>
<name>3MGH_STACT</name>